<evidence type="ECO:0000250" key="1"/>
<evidence type="ECO:0000305" key="2"/>
<protein>
    <recommendedName>
        <fullName>Protein MGF 360-6L</fullName>
    </recommendedName>
</protein>
<name>3606L_ASFK5</name>
<feature type="chain" id="PRO_0000373260" description="Protein MGF 360-6L">
    <location>
        <begin position="1"/>
        <end position="373"/>
    </location>
</feature>
<organismHost>
    <name type="scientific">Ornithodoros</name>
    <name type="common">relapsing fever ticks</name>
    <dbReference type="NCBI Taxonomy" id="6937"/>
</organismHost>
<organismHost>
    <name type="scientific">Phacochoerus aethiopicus</name>
    <name type="common">Warthog</name>
    <dbReference type="NCBI Taxonomy" id="85517"/>
</organismHost>
<organismHost>
    <name type="scientific">Phacochoerus africanus</name>
    <name type="common">Warthog</name>
    <dbReference type="NCBI Taxonomy" id="41426"/>
</organismHost>
<organismHost>
    <name type="scientific">Potamochoerus larvatus</name>
    <name type="common">Bushpig</name>
    <dbReference type="NCBI Taxonomy" id="273792"/>
</organismHost>
<organismHost>
    <name type="scientific">Sus scrofa</name>
    <name type="common">Pig</name>
    <dbReference type="NCBI Taxonomy" id="9823"/>
</organismHost>
<proteinExistence type="inferred from homology"/>
<gene>
    <name type="ordered locus">Ken-024</name>
</gene>
<comment type="function">
    <text evidence="1">Plays a role in virus cell tropism, and may be required for efficient virus replication in macrophages.</text>
</comment>
<comment type="similarity">
    <text evidence="2">Belongs to the asfivirus MGF 360 family.</text>
</comment>
<reference key="1">
    <citation type="submission" date="2003-03" db="EMBL/GenBank/DDBJ databases">
        <title>African swine fever virus genomes.</title>
        <authorList>
            <person name="Kutish G.F."/>
            <person name="Rock D.L."/>
        </authorList>
    </citation>
    <scope>NUCLEOTIDE SEQUENCE [LARGE SCALE GENOMIC DNA]</scope>
</reference>
<accession>P0C9N3</accession>
<organism>
    <name type="scientific">African swine fever virus (isolate Pig/Kenya/KEN-50/1950)</name>
    <name type="common">ASFV</name>
    <dbReference type="NCBI Taxonomy" id="561445"/>
    <lineage>
        <taxon>Viruses</taxon>
        <taxon>Varidnaviria</taxon>
        <taxon>Bamfordvirae</taxon>
        <taxon>Nucleocytoviricota</taxon>
        <taxon>Pokkesviricetes</taxon>
        <taxon>Asfuvirales</taxon>
        <taxon>Asfarviridae</taxon>
        <taxon>Asfivirus</taxon>
        <taxon>African swine fever virus</taxon>
    </lineage>
</organism>
<sequence length="373" mass="43489">MNSLQVLTKKVLIENKAFSNYHEDDSFILQQLGLWWENGPIGFCKQCKMVTGGSMSCSDVDSYELDRALVKAVKENQTDLIKLFVLWGAEINFGIVCAKTERTKVLCIQLGADPKFLDVGLYNMFVDLIKQQKVLLAIDIYYDNISILDSFDSHDFYVLIDFIYNGFILNLDEKEKITKNTLVLKFWYKFAIEFNLVKPIRFLGKKFPHLDDWRLKTAVYLGNVDEIHHAYFQENIRLDPNHMMSLACMYPQNKLGIYYCFALGANINTALEALIRFINHELNRPFFSNYGIWSNVHFCISLGANPYTKKIQEILLREEKYDIMKLLFKKGLLSPHSILHKKILEPSEVRKIISTYQYTETFHSFSSLRDNVR</sequence>
<dbReference type="EMBL" id="AY261360">
    <property type="status" value="NOT_ANNOTATED_CDS"/>
    <property type="molecule type" value="Genomic_DNA"/>
</dbReference>
<dbReference type="SMR" id="P0C9N3"/>
<dbReference type="Proteomes" id="UP000000861">
    <property type="component" value="Segment"/>
</dbReference>
<dbReference type="GO" id="GO:0042330">
    <property type="term" value="P:taxis"/>
    <property type="evidence" value="ECO:0007669"/>
    <property type="project" value="InterPro"/>
</dbReference>
<dbReference type="InterPro" id="IPR002595">
    <property type="entry name" value="ASFV_MGF360"/>
</dbReference>
<dbReference type="Pfam" id="PF01671">
    <property type="entry name" value="ASFV_360"/>
    <property type="match status" value="1"/>
</dbReference>